<feature type="chain" id="PRO_1000187252" description="Heme A synthase">
    <location>
        <begin position="1"/>
        <end position="360"/>
    </location>
</feature>
<feature type="transmembrane region" description="Helical" evidence="1">
    <location>
        <begin position="29"/>
        <end position="49"/>
    </location>
</feature>
<feature type="transmembrane region" description="Helical" evidence="1">
    <location>
        <begin position="111"/>
        <end position="131"/>
    </location>
</feature>
<feature type="transmembrane region" description="Helical" evidence="1">
    <location>
        <begin position="139"/>
        <end position="159"/>
    </location>
</feature>
<feature type="transmembrane region" description="Helical" evidence="1">
    <location>
        <begin position="175"/>
        <end position="195"/>
    </location>
</feature>
<feature type="transmembrane region" description="Helical" evidence="1">
    <location>
        <begin position="210"/>
        <end position="230"/>
    </location>
</feature>
<feature type="transmembrane region" description="Helical" evidence="1">
    <location>
        <begin position="242"/>
        <end position="262"/>
    </location>
</feature>
<feature type="transmembrane region" description="Helical" evidence="1">
    <location>
        <begin position="269"/>
        <end position="289"/>
    </location>
</feature>
<feature type="transmembrane region" description="Helical" evidence="1">
    <location>
        <begin position="309"/>
        <end position="329"/>
    </location>
</feature>
<feature type="transmembrane region" description="Helical" evidence="1">
    <location>
        <begin position="330"/>
        <end position="350"/>
    </location>
</feature>
<feature type="binding site" description="axial binding residue" evidence="1">
    <location>
        <position position="276"/>
    </location>
    <ligand>
        <name>heme</name>
        <dbReference type="ChEBI" id="CHEBI:30413"/>
    </ligand>
    <ligandPart>
        <name>Fe</name>
        <dbReference type="ChEBI" id="CHEBI:18248"/>
    </ligandPart>
</feature>
<feature type="binding site" description="axial binding residue" evidence="1">
    <location>
        <position position="337"/>
    </location>
    <ligand>
        <name>heme</name>
        <dbReference type="ChEBI" id="CHEBI:30413"/>
    </ligand>
    <ligandPart>
        <name>Fe</name>
        <dbReference type="ChEBI" id="CHEBI:18248"/>
    </ligandPart>
</feature>
<dbReference type="EC" id="1.17.99.9" evidence="1"/>
<dbReference type="EMBL" id="CP001349">
    <property type="protein sequence ID" value="ACL60691.1"/>
    <property type="molecule type" value="Genomic_DNA"/>
</dbReference>
<dbReference type="RefSeq" id="WP_015932289.1">
    <property type="nucleotide sequence ID" value="NC_011894.1"/>
</dbReference>
<dbReference type="SMR" id="B8ISP2"/>
<dbReference type="STRING" id="460265.Mnod_5863"/>
<dbReference type="KEGG" id="mno:Mnod_5863"/>
<dbReference type="eggNOG" id="COG1612">
    <property type="taxonomic scope" value="Bacteria"/>
</dbReference>
<dbReference type="HOGENOM" id="CLU_017627_0_0_5"/>
<dbReference type="OrthoDB" id="9793156at2"/>
<dbReference type="UniPathway" id="UPA00269">
    <property type="reaction ID" value="UER00713"/>
</dbReference>
<dbReference type="Proteomes" id="UP000008207">
    <property type="component" value="Chromosome"/>
</dbReference>
<dbReference type="GO" id="GO:0005886">
    <property type="term" value="C:plasma membrane"/>
    <property type="evidence" value="ECO:0007669"/>
    <property type="project" value="UniProtKB-SubCell"/>
</dbReference>
<dbReference type="GO" id="GO:0046872">
    <property type="term" value="F:metal ion binding"/>
    <property type="evidence" value="ECO:0007669"/>
    <property type="project" value="UniProtKB-KW"/>
</dbReference>
<dbReference type="GO" id="GO:0016653">
    <property type="term" value="F:oxidoreductase activity, acting on NAD(P)H, heme protein as acceptor"/>
    <property type="evidence" value="ECO:0007669"/>
    <property type="project" value="InterPro"/>
</dbReference>
<dbReference type="GO" id="GO:0006784">
    <property type="term" value="P:heme A biosynthetic process"/>
    <property type="evidence" value="ECO:0007669"/>
    <property type="project" value="UniProtKB-UniRule"/>
</dbReference>
<dbReference type="HAMAP" id="MF_01665">
    <property type="entry name" value="HemeA_synth_type2"/>
    <property type="match status" value="1"/>
</dbReference>
<dbReference type="InterPro" id="IPR003780">
    <property type="entry name" value="COX15/CtaA_fam"/>
</dbReference>
<dbReference type="InterPro" id="IPR023754">
    <property type="entry name" value="HemeA_Synthase_type2"/>
</dbReference>
<dbReference type="PANTHER" id="PTHR23289">
    <property type="entry name" value="CYTOCHROME C OXIDASE ASSEMBLY PROTEIN COX15"/>
    <property type="match status" value="1"/>
</dbReference>
<dbReference type="PANTHER" id="PTHR23289:SF2">
    <property type="entry name" value="CYTOCHROME C OXIDASE ASSEMBLY PROTEIN COX15 HOMOLOG"/>
    <property type="match status" value="1"/>
</dbReference>
<dbReference type="Pfam" id="PF02628">
    <property type="entry name" value="COX15-CtaA"/>
    <property type="match status" value="1"/>
</dbReference>
<name>CTAA_METNO</name>
<sequence>MTSAALAPSSAAPAGAGAAPRSRAAVRRWLFAMAALVIAMVAVGGATRLTGSGLSITEWKPVTGAIPPLSAEAWTEEFAKYRATPQYDILNRGMSLAEFQVIYAWEWGHRFLGRLIGFAFFLPLGWFWWTGRLDRRLGLGLLGLGVLGGLQGAVGWIMVASGLQPGMTAVAPIKLAAHLTLASAIFAGLVWLAAGLDRAPDEPLPRRLRLTALALPLLMLVQIALGGLVAGSKAGLTYNTWPLMDGAFIPPLSGLFAVTPWIENFVDNVALVQLNHRLAAYGLLAVAALHWLDLFRTRPGSRAAKRAGAILGLVTAQAALGITTLLLAVPLWAGLAHQVTAMLVLGMAAVHARIATLSRA</sequence>
<evidence type="ECO:0000255" key="1">
    <source>
        <dbReference type="HAMAP-Rule" id="MF_01665"/>
    </source>
</evidence>
<organism>
    <name type="scientific">Methylobacterium nodulans (strain LMG 21967 / CNCM I-2342 / ORS 2060)</name>
    <dbReference type="NCBI Taxonomy" id="460265"/>
    <lineage>
        <taxon>Bacteria</taxon>
        <taxon>Pseudomonadati</taxon>
        <taxon>Pseudomonadota</taxon>
        <taxon>Alphaproteobacteria</taxon>
        <taxon>Hyphomicrobiales</taxon>
        <taxon>Methylobacteriaceae</taxon>
        <taxon>Methylobacterium</taxon>
    </lineage>
</organism>
<gene>
    <name evidence="1" type="primary">ctaA</name>
    <name type="ordered locus">Mnod_5863</name>
</gene>
<accession>B8ISP2</accession>
<keyword id="KW-1003">Cell membrane</keyword>
<keyword id="KW-0350">Heme biosynthesis</keyword>
<keyword id="KW-0408">Iron</keyword>
<keyword id="KW-0472">Membrane</keyword>
<keyword id="KW-0479">Metal-binding</keyword>
<keyword id="KW-0560">Oxidoreductase</keyword>
<keyword id="KW-1185">Reference proteome</keyword>
<keyword id="KW-0812">Transmembrane</keyword>
<keyword id="KW-1133">Transmembrane helix</keyword>
<proteinExistence type="inferred from homology"/>
<reference key="1">
    <citation type="submission" date="2009-01" db="EMBL/GenBank/DDBJ databases">
        <title>Complete sequence of chromosome of Methylobacterium nodulans ORS 2060.</title>
        <authorList>
            <consortium name="US DOE Joint Genome Institute"/>
            <person name="Lucas S."/>
            <person name="Copeland A."/>
            <person name="Lapidus A."/>
            <person name="Glavina del Rio T."/>
            <person name="Dalin E."/>
            <person name="Tice H."/>
            <person name="Bruce D."/>
            <person name="Goodwin L."/>
            <person name="Pitluck S."/>
            <person name="Sims D."/>
            <person name="Brettin T."/>
            <person name="Detter J.C."/>
            <person name="Han C."/>
            <person name="Larimer F."/>
            <person name="Land M."/>
            <person name="Hauser L."/>
            <person name="Kyrpides N."/>
            <person name="Ivanova N."/>
            <person name="Marx C.J."/>
            <person name="Richardson P."/>
        </authorList>
    </citation>
    <scope>NUCLEOTIDE SEQUENCE [LARGE SCALE GENOMIC DNA]</scope>
    <source>
        <strain>LMG 21967 / CNCM I-2342 / ORS 2060</strain>
    </source>
</reference>
<comment type="function">
    <text evidence="1">Catalyzes the conversion of heme O to heme A by two successive hydroxylations of the methyl group at C8. The first hydroxylation forms heme I, the second hydroxylation results in an unstable dihydroxymethyl group, which spontaneously dehydrates, resulting in the formyl group of heme A.</text>
</comment>
<comment type="catalytic activity">
    <reaction evidence="1">
        <text>Fe(II)-heme o + 2 A + H2O = Fe(II)-heme a + 2 AH2</text>
        <dbReference type="Rhea" id="RHEA:63388"/>
        <dbReference type="ChEBI" id="CHEBI:13193"/>
        <dbReference type="ChEBI" id="CHEBI:15377"/>
        <dbReference type="ChEBI" id="CHEBI:17499"/>
        <dbReference type="ChEBI" id="CHEBI:60530"/>
        <dbReference type="ChEBI" id="CHEBI:61715"/>
        <dbReference type="EC" id="1.17.99.9"/>
    </reaction>
    <physiologicalReaction direction="left-to-right" evidence="1">
        <dbReference type="Rhea" id="RHEA:63389"/>
    </physiologicalReaction>
</comment>
<comment type="cofactor">
    <cofactor evidence="1">
        <name>heme b</name>
        <dbReference type="ChEBI" id="CHEBI:60344"/>
    </cofactor>
</comment>
<comment type="pathway">
    <text evidence="1">Porphyrin-containing compound metabolism; heme A biosynthesis; heme A from heme O: step 1/1.</text>
</comment>
<comment type="subunit">
    <text evidence="1">Interacts with CtaB.</text>
</comment>
<comment type="subcellular location">
    <subcellularLocation>
        <location evidence="1">Cell membrane</location>
        <topology evidence="1">Multi-pass membrane protein</topology>
    </subcellularLocation>
</comment>
<comment type="similarity">
    <text evidence="1">Belongs to the COX15/CtaA family. Type 2 subfamily.</text>
</comment>
<protein>
    <recommendedName>
        <fullName evidence="1">Heme A synthase</fullName>
        <shortName evidence="1">HAS</shortName>
        <ecNumber evidence="1">1.17.99.9</ecNumber>
    </recommendedName>
    <alternativeName>
        <fullName evidence="1">Cytochrome aa3-controlling protein</fullName>
    </alternativeName>
</protein>